<comment type="function">
    <text evidence="1">Involved in the de novo purine biosynthesis. Catalyzes the transfer of formate to 5-phospho-ribosyl-glycinamide (GAR), producing 5-phospho-ribosyl-N-formylglycinamide (FGAR). Formate is provided by PurU via hydrolysis of 10-formyl-tetrahydrofolate.</text>
</comment>
<comment type="catalytic activity">
    <reaction evidence="1">
        <text>N(1)-(5-phospho-beta-D-ribosyl)glycinamide + formate + ATP = N(2)-formyl-N(1)-(5-phospho-beta-D-ribosyl)glycinamide + ADP + phosphate + H(+)</text>
        <dbReference type="Rhea" id="RHEA:24829"/>
        <dbReference type="ChEBI" id="CHEBI:15378"/>
        <dbReference type="ChEBI" id="CHEBI:15740"/>
        <dbReference type="ChEBI" id="CHEBI:30616"/>
        <dbReference type="ChEBI" id="CHEBI:43474"/>
        <dbReference type="ChEBI" id="CHEBI:143788"/>
        <dbReference type="ChEBI" id="CHEBI:147286"/>
        <dbReference type="ChEBI" id="CHEBI:456216"/>
        <dbReference type="EC" id="6.3.1.21"/>
    </reaction>
    <physiologicalReaction direction="left-to-right" evidence="1">
        <dbReference type="Rhea" id="RHEA:24830"/>
    </physiologicalReaction>
</comment>
<comment type="pathway">
    <text evidence="1">Purine metabolism; IMP biosynthesis via de novo pathway; N(2)-formyl-N(1)-(5-phospho-D-ribosyl)glycinamide from N(1)-(5-phospho-D-ribosyl)glycinamide (formate route): step 1/1.</text>
</comment>
<comment type="subunit">
    <text evidence="1">Homodimer.</text>
</comment>
<comment type="similarity">
    <text evidence="1">Belongs to the PurK/PurT family.</text>
</comment>
<reference key="1">
    <citation type="submission" date="2009-06" db="EMBL/GenBank/DDBJ databases">
        <title>Complete sequence of Desulfovibrio salexigens DSM 2638.</title>
        <authorList>
            <consortium name="US DOE Joint Genome Institute"/>
            <person name="Lucas S."/>
            <person name="Copeland A."/>
            <person name="Lapidus A."/>
            <person name="Glavina del Rio T."/>
            <person name="Tice H."/>
            <person name="Bruce D."/>
            <person name="Goodwin L."/>
            <person name="Pitluck S."/>
            <person name="Munk A.C."/>
            <person name="Brettin T."/>
            <person name="Detter J.C."/>
            <person name="Han C."/>
            <person name="Tapia R."/>
            <person name="Larimer F."/>
            <person name="Land M."/>
            <person name="Hauser L."/>
            <person name="Kyrpides N."/>
            <person name="Anderson I."/>
            <person name="Wall J.D."/>
            <person name="Arkin A.P."/>
            <person name="Dehal P."/>
            <person name="Chivian D."/>
            <person name="Giles B."/>
            <person name="Hazen T.C."/>
        </authorList>
    </citation>
    <scope>NUCLEOTIDE SEQUENCE [LARGE SCALE GENOMIC DNA]</scope>
    <source>
        <strain>ATCC 14822 / DSM 2638 / NCIMB 8403 / VKM B-1763</strain>
    </source>
</reference>
<accession>C6BV99</accession>
<name>PURT_MARSD</name>
<keyword id="KW-0067">ATP-binding</keyword>
<keyword id="KW-0436">Ligase</keyword>
<keyword id="KW-0460">Magnesium</keyword>
<keyword id="KW-0479">Metal-binding</keyword>
<keyword id="KW-0547">Nucleotide-binding</keyword>
<keyword id="KW-0658">Purine biosynthesis</keyword>
<keyword id="KW-1185">Reference proteome</keyword>
<sequence>MVTLGTAGTASARKMMLLGGGELGKEVVIEAQRLGVEVIVVDRYENTPAMQVAHRSYVISMLDTAELRRVVETEKPDYIVPEIEAIATETLLELEKEGFNVVPTARATRLTMDREGIRRLAAEEVGLKTSPYKFADTKEEYLEAIKEIGIPCVIKPVMSSSGKGQSTVKSEADVDRAWDYSQSGGRTGEGRIIVESFVDFDYEITLLTVRHAGGTSYCAPIGHRQDDGDYRESWQPQPMSDAALANAQDYALRITDALGGRGLFGVELFIKGEEVIFSEVSPRPHDTGLVTVISQDLSEFALHVRAILGLPIPAIRQYGPAASSVILSNGKSEAPAFANVDKALEAADTKVLIFGKGECNGVRRLGVALALGEDVTDAKARAIRASSAVEIEY</sequence>
<gene>
    <name evidence="1" type="primary">purT</name>
    <name type="ordered locus">Desal_2014</name>
</gene>
<organism>
    <name type="scientific">Maridesulfovibrio salexigens (strain ATCC 14822 / DSM 2638 / NCIMB 8403 / VKM B-1763)</name>
    <name type="common">Desulfovibrio salexigens</name>
    <dbReference type="NCBI Taxonomy" id="526222"/>
    <lineage>
        <taxon>Bacteria</taxon>
        <taxon>Pseudomonadati</taxon>
        <taxon>Thermodesulfobacteriota</taxon>
        <taxon>Desulfovibrionia</taxon>
        <taxon>Desulfovibrionales</taxon>
        <taxon>Desulfovibrionaceae</taxon>
        <taxon>Maridesulfovibrio</taxon>
    </lineage>
</organism>
<dbReference type="EC" id="6.3.1.21" evidence="1"/>
<dbReference type="EMBL" id="CP001649">
    <property type="protein sequence ID" value="ACS80074.1"/>
    <property type="molecule type" value="Genomic_DNA"/>
</dbReference>
<dbReference type="RefSeq" id="WP_015851890.1">
    <property type="nucleotide sequence ID" value="NC_012881.1"/>
</dbReference>
<dbReference type="SMR" id="C6BV99"/>
<dbReference type="STRING" id="526222.Desal_2014"/>
<dbReference type="KEGG" id="dsa:Desal_2014"/>
<dbReference type="eggNOG" id="COG0027">
    <property type="taxonomic scope" value="Bacteria"/>
</dbReference>
<dbReference type="HOGENOM" id="CLU_011534_1_3_7"/>
<dbReference type="OrthoDB" id="9804625at2"/>
<dbReference type="UniPathway" id="UPA00074">
    <property type="reaction ID" value="UER00127"/>
</dbReference>
<dbReference type="Proteomes" id="UP000002601">
    <property type="component" value="Chromosome"/>
</dbReference>
<dbReference type="GO" id="GO:0005829">
    <property type="term" value="C:cytosol"/>
    <property type="evidence" value="ECO:0007669"/>
    <property type="project" value="TreeGrafter"/>
</dbReference>
<dbReference type="GO" id="GO:0005524">
    <property type="term" value="F:ATP binding"/>
    <property type="evidence" value="ECO:0007669"/>
    <property type="project" value="UniProtKB-UniRule"/>
</dbReference>
<dbReference type="GO" id="GO:0000287">
    <property type="term" value="F:magnesium ion binding"/>
    <property type="evidence" value="ECO:0007669"/>
    <property type="project" value="InterPro"/>
</dbReference>
<dbReference type="GO" id="GO:0043815">
    <property type="term" value="F:phosphoribosylglycinamide formyltransferase 2 activity"/>
    <property type="evidence" value="ECO:0007669"/>
    <property type="project" value="UniProtKB-UniRule"/>
</dbReference>
<dbReference type="GO" id="GO:0004644">
    <property type="term" value="F:phosphoribosylglycinamide formyltransferase activity"/>
    <property type="evidence" value="ECO:0007669"/>
    <property type="project" value="InterPro"/>
</dbReference>
<dbReference type="GO" id="GO:0006189">
    <property type="term" value="P:'de novo' IMP biosynthetic process"/>
    <property type="evidence" value="ECO:0007669"/>
    <property type="project" value="UniProtKB-UniRule"/>
</dbReference>
<dbReference type="FunFam" id="3.30.1490.20:FF:000013">
    <property type="entry name" value="Formate-dependent phosphoribosylglycinamide formyltransferase"/>
    <property type="match status" value="1"/>
</dbReference>
<dbReference type="FunFam" id="3.30.470.20:FF:000027">
    <property type="entry name" value="Formate-dependent phosphoribosylglycinamide formyltransferase"/>
    <property type="match status" value="1"/>
</dbReference>
<dbReference type="FunFam" id="3.40.50.20:FF:000007">
    <property type="entry name" value="Formate-dependent phosphoribosylglycinamide formyltransferase"/>
    <property type="match status" value="1"/>
</dbReference>
<dbReference type="Gene3D" id="3.40.50.20">
    <property type="match status" value="1"/>
</dbReference>
<dbReference type="Gene3D" id="3.30.1490.20">
    <property type="entry name" value="ATP-grasp fold, A domain"/>
    <property type="match status" value="1"/>
</dbReference>
<dbReference type="Gene3D" id="3.30.470.20">
    <property type="entry name" value="ATP-grasp fold, B domain"/>
    <property type="match status" value="1"/>
</dbReference>
<dbReference type="HAMAP" id="MF_01643">
    <property type="entry name" value="PurT"/>
    <property type="match status" value="1"/>
</dbReference>
<dbReference type="InterPro" id="IPR011761">
    <property type="entry name" value="ATP-grasp"/>
</dbReference>
<dbReference type="InterPro" id="IPR003135">
    <property type="entry name" value="ATP-grasp_carboxylate-amine"/>
</dbReference>
<dbReference type="InterPro" id="IPR013815">
    <property type="entry name" value="ATP_grasp_subdomain_1"/>
</dbReference>
<dbReference type="InterPro" id="IPR016185">
    <property type="entry name" value="PreATP-grasp_dom_sf"/>
</dbReference>
<dbReference type="InterPro" id="IPR005862">
    <property type="entry name" value="PurT"/>
</dbReference>
<dbReference type="InterPro" id="IPR054350">
    <property type="entry name" value="PurT/PurK_preATP-grasp"/>
</dbReference>
<dbReference type="InterPro" id="IPR048740">
    <property type="entry name" value="PurT_C"/>
</dbReference>
<dbReference type="InterPro" id="IPR011054">
    <property type="entry name" value="Rudment_hybrid_motif"/>
</dbReference>
<dbReference type="NCBIfam" id="NF006766">
    <property type="entry name" value="PRK09288.1"/>
    <property type="match status" value="1"/>
</dbReference>
<dbReference type="NCBIfam" id="TIGR01142">
    <property type="entry name" value="purT"/>
    <property type="match status" value="1"/>
</dbReference>
<dbReference type="PANTHER" id="PTHR43055">
    <property type="entry name" value="FORMATE-DEPENDENT PHOSPHORIBOSYLGLYCINAMIDE FORMYLTRANSFERASE"/>
    <property type="match status" value="1"/>
</dbReference>
<dbReference type="PANTHER" id="PTHR43055:SF1">
    <property type="entry name" value="FORMATE-DEPENDENT PHOSPHORIBOSYLGLYCINAMIDE FORMYLTRANSFERASE"/>
    <property type="match status" value="1"/>
</dbReference>
<dbReference type="Pfam" id="PF02222">
    <property type="entry name" value="ATP-grasp"/>
    <property type="match status" value="1"/>
</dbReference>
<dbReference type="Pfam" id="PF21244">
    <property type="entry name" value="PurT_C"/>
    <property type="match status" value="1"/>
</dbReference>
<dbReference type="Pfam" id="PF22660">
    <property type="entry name" value="RS_preATP-grasp-like"/>
    <property type="match status" value="1"/>
</dbReference>
<dbReference type="SUPFAM" id="SSF56059">
    <property type="entry name" value="Glutathione synthetase ATP-binding domain-like"/>
    <property type="match status" value="1"/>
</dbReference>
<dbReference type="SUPFAM" id="SSF52440">
    <property type="entry name" value="PreATP-grasp domain"/>
    <property type="match status" value="1"/>
</dbReference>
<dbReference type="SUPFAM" id="SSF51246">
    <property type="entry name" value="Rudiment single hybrid motif"/>
    <property type="match status" value="1"/>
</dbReference>
<dbReference type="PROSITE" id="PS50975">
    <property type="entry name" value="ATP_GRASP"/>
    <property type="match status" value="1"/>
</dbReference>
<feature type="chain" id="PRO_1000215834" description="Formate-dependent phosphoribosylglycinamide formyltransferase">
    <location>
        <begin position="1"/>
        <end position="393"/>
    </location>
</feature>
<feature type="domain" description="ATP-grasp" evidence="1">
    <location>
        <begin position="119"/>
        <end position="308"/>
    </location>
</feature>
<feature type="binding site" evidence="1">
    <location>
        <begin position="22"/>
        <end position="23"/>
    </location>
    <ligand>
        <name>N(1)-(5-phospho-beta-D-ribosyl)glycinamide</name>
        <dbReference type="ChEBI" id="CHEBI:143788"/>
    </ligand>
</feature>
<feature type="binding site" evidence="1">
    <location>
        <position position="82"/>
    </location>
    <ligand>
        <name>N(1)-(5-phospho-beta-D-ribosyl)glycinamide</name>
        <dbReference type="ChEBI" id="CHEBI:143788"/>
    </ligand>
</feature>
<feature type="binding site" evidence="1">
    <location>
        <position position="114"/>
    </location>
    <ligand>
        <name>ATP</name>
        <dbReference type="ChEBI" id="CHEBI:30616"/>
    </ligand>
</feature>
<feature type="binding site" evidence="1">
    <location>
        <position position="155"/>
    </location>
    <ligand>
        <name>ATP</name>
        <dbReference type="ChEBI" id="CHEBI:30616"/>
    </ligand>
</feature>
<feature type="binding site" evidence="1">
    <location>
        <begin position="160"/>
        <end position="165"/>
    </location>
    <ligand>
        <name>ATP</name>
        <dbReference type="ChEBI" id="CHEBI:30616"/>
    </ligand>
</feature>
<feature type="binding site" evidence="1">
    <location>
        <begin position="195"/>
        <end position="198"/>
    </location>
    <ligand>
        <name>ATP</name>
        <dbReference type="ChEBI" id="CHEBI:30616"/>
    </ligand>
</feature>
<feature type="binding site" evidence="1">
    <location>
        <position position="203"/>
    </location>
    <ligand>
        <name>ATP</name>
        <dbReference type="ChEBI" id="CHEBI:30616"/>
    </ligand>
</feature>
<feature type="binding site" evidence="1">
    <location>
        <position position="267"/>
    </location>
    <ligand>
        <name>Mg(2+)</name>
        <dbReference type="ChEBI" id="CHEBI:18420"/>
    </ligand>
</feature>
<feature type="binding site" evidence="1">
    <location>
        <position position="279"/>
    </location>
    <ligand>
        <name>Mg(2+)</name>
        <dbReference type="ChEBI" id="CHEBI:18420"/>
    </ligand>
</feature>
<feature type="binding site" evidence="1">
    <location>
        <position position="286"/>
    </location>
    <ligand>
        <name>N(1)-(5-phospho-beta-D-ribosyl)glycinamide</name>
        <dbReference type="ChEBI" id="CHEBI:143788"/>
    </ligand>
</feature>
<feature type="binding site" evidence="1">
    <location>
        <position position="356"/>
    </location>
    <ligand>
        <name>N(1)-(5-phospho-beta-D-ribosyl)glycinamide</name>
        <dbReference type="ChEBI" id="CHEBI:143788"/>
    </ligand>
</feature>
<feature type="binding site" evidence="1">
    <location>
        <begin position="363"/>
        <end position="364"/>
    </location>
    <ligand>
        <name>N(1)-(5-phospho-beta-D-ribosyl)glycinamide</name>
        <dbReference type="ChEBI" id="CHEBI:143788"/>
    </ligand>
</feature>
<proteinExistence type="inferred from homology"/>
<evidence type="ECO:0000255" key="1">
    <source>
        <dbReference type="HAMAP-Rule" id="MF_01643"/>
    </source>
</evidence>
<protein>
    <recommendedName>
        <fullName evidence="1">Formate-dependent phosphoribosylglycinamide formyltransferase</fullName>
        <ecNumber evidence="1">6.3.1.21</ecNumber>
    </recommendedName>
    <alternativeName>
        <fullName evidence="1">5'-phosphoribosylglycinamide transformylase 2</fullName>
    </alternativeName>
    <alternativeName>
        <fullName evidence="1">Formate-dependent GAR transformylase</fullName>
    </alternativeName>
    <alternativeName>
        <fullName evidence="1">GAR transformylase 2</fullName>
        <shortName evidence="1">GART 2</shortName>
    </alternativeName>
    <alternativeName>
        <fullName evidence="1">Non-folate glycinamide ribonucleotide transformylase</fullName>
    </alternativeName>
    <alternativeName>
        <fullName evidence="1">Phosphoribosylglycinamide formyltransferase 2</fullName>
    </alternativeName>
</protein>